<dbReference type="EMBL" id="CP000521">
    <property type="protein sequence ID" value="ABO12389.2"/>
    <property type="molecule type" value="Genomic_DNA"/>
</dbReference>
<dbReference type="RefSeq" id="WP_000344169.1">
    <property type="nucleotide sequence ID" value="NZ_CP053098.1"/>
</dbReference>
<dbReference type="SMR" id="A3M645"/>
<dbReference type="GeneID" id="92894223"/>
<dbReference type="KEGG" id="acb:A1S_1962"/>
<dbReference type="HOGENOM" id="CLU_040469_3_2_6"/>
<dbReference type="PHI-base" id="PHI:10380"/>
<dbReference type="GO" id="GO:0005829">
    <property type="term" value="C:cytosol"/>
    <property type="evidence" value="ECO:0007669"/>
    <property type="project" value="TreeGrafter"/>
</dbReference>
<dbReference type="GO" id="GO:0005524">
    <property type="term" value="F:ATP binding"/>
    <property type="evidence" value="ECO:0007669"/>
    <property type="project" value="UniProtKB-UniRule"/>
</dbReference>
<dbReference type="GO" id="GO:0016887">
    <property type="term" value="F:ATP hydrolysis activity"/>
    <property type="evidence" value="ECO:0007669"/>
    <property type="project" value="InterPro"/>
</dbReference>
<dbReference type="GO" id="GO:0140664">
    <property type="term" value="F:ATP-dependent DNA damage sensor activity"/>
    <property type="evidence" value="ECO:0007669"/>
    <property type="project" value="InterPro"/>
</dbReference>
<dbReference type="GO" id="GO:0003684">
    <property type="term" value="F:damaged DNA binding"/>
    <property type="evidence" value="ECO:0007669"/>
    <property type="project" value="UniProtKB-UniRule"/>
</dbReference>
<dbReference type="GO" id="GO:0003697">
    <property type="term" value="F:single-stranded DNA binding"/>
    <property type="evidence" value="ECO:0007669"/>
    <property type="project" value="UniProtKB-UniRule"/>
</dbReference>
<dbReference type="GO" id="GO:0006310">
    <property type="term" value="P:DNA recombination"/>
    <property type="evidence" value="ECO:0007669"/>
    <property type="project" value="UniProtKB-UniRule"/>
</dbReference>
<dbReference type="GO" id="GO:0006281">
    <property type="term" value="P:DNA repair"/>
    <property type="evidence" value="ECO:0007669"/>
    <property type="project" value="UniProtKB-UniRule"/>
</dbReference>
<dbReference type="GO" id="GO:0009432">
    <property type="term" value="P:SOS response"/>
    <property type="evidence" value="ECO:0007669"/>
    <property type="project" value="UniProtKB-UniRule"/>
</dbReference>
<dbReference type="CDD" id="cd00983">
    <property type="entry name" value="RecA"/>
    <property type="match status" value="1"/>
</dbReference>
<dbReference type="FunFam" id="3.40.50.300:FF:000087">
    <property type="entry name" value="Recombinase RecA"/>
    <property type="match status" value="1"/>
</dbReference>
<dbReference type="Gene3D" id="3.40.50.300">
    <property type="entry name" value="P-loop containing nucleotide triphosphate hydrolases"/>
    <property type="match status" value="1"/>
</dbReference>
<dbReference type="HAMAP" id="MF_00268">
    <property type="entry name" value="RecA"/>
    <property type="match status" value="1"/>
</dbReference>
<dbReference type="InterPro" id="IPR003593">
    <property type="entry name" value="AAA+_ATPase"/>
</dbReference>
<dbReference type="InterPro" id="IPR013765">
    <property type="entry name" value="DNA_recomb/repair_RecA"/>
</dbReference>
<dbReference type="InterPro" id="IPR020584">
    <property type="entry name" value="DNA_recomb/repair_RecA_CS"/>
</dbReference>
<dbReference type="InterPro" id="IPR027417">
    <property type="entry name" value="P-loop_NTPase"/>
</dbReference>
<dbReference type="InterPro" id="IPR049261">
    <property type="entry name" value="RecA-like_C"/>
</dbReference>
<dbReference type="InterPro" id="IPR049428">
    <property type="entry name" value="RecA-like_N"/>
</dbReference>
<dbReference type="InterPro" id="IPR020588">
    <property type="entry name" value="RecA_ATP-bd"/>
</dbReference>
<dbReference type="InterPro" id="IPR023400">
    <property type="entry name" value="RecA_C_sf"/>
</dbReference>
<dbReference type="InterPro" id="IPR020587">
    <property type="entry name" value="RecA_monomer-monomer_interface"/>
</dbReference>
<dbReference type="NCBIfam" id="TIGR02012">
    <property type="entry name" value="tigrfam_recA"/>
    <property type="match status" value="1"/>
</dbReference>
<dbReference type="PANTHER" id="PTHR45900:SF1">
    <property type="entry name" value="MITOCHONDRIAL DNA REPAIR PROTEIN RECA HOMOLOG-RELATED"/>
    <property type="match status" value="1"/>
</dbReference>
<dbReference type="PANTHER" id="PTHR45900">
    <property type="entry name" value="RECA"/>
    <property type="match status" value="1"/>
</dbReference>
<dbReference type="Pfam" id="PF00154">
    <property type="entry name" value="RecA"/>
    <property type="match status" value="1"/>
</dbReference>
<dbReference type="Pfam" id="PF21096">
    <property type="entry name" value="RecA_C"/>
    <property type="match status" value="1"/>
</dbReference>
<dbReference type="PRINTS" id="PR00142">
    <property type="entry name" value="RECA"/>
</dbReference>
<dbReference type="SMART" id="SM00382">
    <property type="entry name" value="AAA"/>
    <property type="match status" value="1"/>
</dbReference>
<dbReference type="SUPFAM" id="SSF52540">
    <property type="entry name" value="P-loop containing nucleoside triphosphate hydrolases"/>
    <property type="match status" value="1"/>
</dbReference>
<dbReference type="SUPFAM" id="SSF54752">
    <property type="entry name" value="RecA protein, C-terminal domain"/>
    <property type="match status" value="1"/>
</dbReference>
<dbReference type="PROSITE" id="PS00321">
    <property type="entry name" value="RECA_1"/>
    <property type="match status" value="1"/>
</dbReference>
<dbReference type="PROSITE" id="PS50162">
    <property type="entry name" value="RECA_2"/>
    <property type="match status" value="1"/>
</dbReference>
<dbReference type="PROSITE" id="PS50163">
    <property type="entry name" value="RECA_3"/>
    <property type="match status" value="1"/>
</dbReference>
<feature type="chain" id="PRO_1000114308" description="Protein RecA">
    <location>
        <begin position="1"/>
        <end position="349"/>
    </location>
</feature>
<feature type="binding site" evidence="1">
    <location>
        <begin position="65"/>
        <end position="72"/>
    </location>
    <ligand>
        <name>ATP</name>
        <dbReference type="ChEBI" id="CHEBI:30616"/>
    </ligand>
</feature>
<accession>A3M645</accession>
<evidence type="ECO:0000255" key="1">
    <source>
        <dbReference type="HAMAP-Rule" id="MF_00268"/>
    </source>
</evidence>
<proteinExistence type="inferred from homology"/>
<organism>
    <name type="scientific">Acinetobacter baumannii (strain ATCC 17978 / DSM 105126 / CIP 53.77 / LMG 1025 / NCDC KC755 / 5377)</name>
    <dbReference type="NCBI Taxonomy" id="400667"/>
    <lineage>
        <taxon>Bacteria</taxon>
        <taxon>Pseudomonadati</taxon>
        <taxon>Pseudomonadota</taxon>
        <taxon>Gammaproteobacteria</taxon>
        <taxon>Moraxellales</taxon>
        <taxon>Moraxellaceae</taxon>
        <taxon>Acinetobacter</taxon>
        <taxon>Acinetobacter calcoaceticus/baumannii complex</taxon>
    </lineage>
</organism>
<keyword id="KW-0067">ATP-binding</keyword>
<keyword id="KW-0963">Cytoplasm</keyword>
<keyword id="KW-0227">DNA damage</keyword>
<keyword id="KW-0233">DNA recombination</keyword>
<keyword id="KW-0234">DNA repair</keyword>
<keyword id="KW-0238">DNA-binding</keyword>
<keyword id="KW-0547">Nucleotide-binding</keyword>
<keyword id="KW-0742">SOS response</keyword>
<comment type="function">
    <text evidence="1">Can catalyze the hydrolysis of ATP in the presence of single-stranded DNA, the ATP-dependent uptake of single-stranded DNA by duplex DNA, and the ATP-dependent hybridization of homologous single-stranded DNAs. It interacts with LexA causing its activation and leading to its autocatalytic cleavage.</text>
</comment>
<comment type="subcellular location">
    <subcellularLocation>
        <location evidence="1">Cytoplasm</location>
    </subcellularLocation>
</comment>
<comment type="similarity">
    <text evidence="1">Belongs to the RecA family.</text>
</comment>
<sequence length="349" mass="37891">MDENKSKALQAALSQIEKQFGKNTVMRLGDNTVQAVEAVSTGSLTLDIALGIGGLPKGRIIEIYGPESSGKTTMTLQAIAQCQKSGGTCAFIDAEHALDPQYARKLGVDIDNLLVSQPDNGEQALEIADMLVRSGAIDLIVVDSVAALTPKAEIEGEMGDSHMGLQARLMSQALRKITGNAKRSNCMVIFINQIRMKIGVMFGSPETTTGGNALKFYASVRLDIRRIGQVKEGDEIVGSETKVKVVKNKMAPPFKEAIFQILYGKGTNQLGELVDLAVQQDIVQKAGAWYSYQGNKIGQGKNNVIRYFEENTQIAEEIERNIREQLLTTGTNGAVQIEDEEEPDLLLES</sequence>
<reference key="1">
    <citation type="journal article" date="2007" name="Genes Dev.">
        <title>New insights into Acinetobacter baumannii pathogenesis revealed by high-density pyrosequencing and transposon mutagenesis.</title>
        <authorList>
            <person name="Smith M.G."/>
            <person name="Gianoulis T.A."/>
            <person name="Pukatzki S."/>
            <person name="Mekalanos J.J."/>
            <person name="Ornston L.N."/>
            <person name="Gerstein M."/>
            <person name="Snyder M."/>
        </authorList>
    </citation>
    <scope>NUCLEOTIDE SEQUENCE [LARGE SCALE GENOMIC DNA]</scope>
    <source>
        <strain>ATCC 17978 / DSM 105126 / CIP 53.77 / LMG 1025 / NCDC KC755 / 5377</strain>
    </source>
</reference>
<name>RECA_ACIBT</name>
<protein>
    <recommendedName>
        <fullName evidence="1">Protein RecA</fullName>
    </recommendedName>
    <alternativeName>
        <fullName evidence="1">Recombinase A</fullName>
    </alternativeName>
</protein>
<gene>
    <name evidence="1" type="primary">recA</name>
    <name type="ordered locus">A1S_1962</name>
</gene>